<name>THII_METAC</name>
<organism>
    <name type="scientific">Methanosarcina acetivorans (strain ATCC 35395 / DSM 2834 / JCM 12185 / C2A)</name>
    <dbReference type="NCBI Taxonomy" id="188937"/>
    <lineage>
        <taxon>Archaea</taxon>
        <taxon>Methanobacteriati</taxon>
        <taxon>Methanobacteriota</taxon>
        <taxon>Stenosarchaea group</taxon>
        <taxon>Methanomicrobia</taxon>
        <taxon>Methanosarcinales</taxon>
        <taxon>Methanosarcinaceae</taxon>
        <taxon>Methanosarcina</taxon>
    </lineage>
</organism>
<evidence type="ECO:0000255" key="1">
    <source>
        <dbReference type="HAMAP-Rule" id="MF_00021"/>
    </source>
</evidence>
<evidence type="ECO:0000256" key="2">
    <source>
        <dbReference type="SAM" id="MobiDB-lite"/>
    </source>
</evidence>
<evidence type="ECO:0000305" key="3"/>
<comment type="function">
    <text evidence="1">Catalyzes the ATP-dependent transfer of a sulfur to tRNA to produce 4-thiouridine in position 8 of tRNAs, which functions as a near-UV photosensor. Also catalyzes the transfer of sulfur to the sulfur carrier protein ThiS, forming ThiS-thiocarboxylate. This is a step in the synthesis of thiazole, in the thiamine biosynthesis pathway. The sulfur is donated as persulfide by IscS.</text>
</comment>
<comment type="catalytic activity">
    <reaction evidence="1">
        <text>[ThiI sulfur-carrier protein]-S-sulfanyl-L-cysteine + a uridine in tRNA + 2 reduced [2Fe-2S]-[ferredoxin] + ATP + H(+) = [ThiI sulfur-carrier protein]-L-cysteine + a 4-thiouridine in tRNA + 2 oxidized [2Fe-2S]-[ferredoxin] + AMP + diphosphate</text>
        <dbReference type="Rhea" id="RHEA:24176"/>
        <dbReference type="Rhea" id="RHEA-COMP:10000"/>
        <dbReference type="Rhea" id="RHEA-COMP:10001"/>
        <dbReference type="Rhea" id="RHEA-COMP:13337"/>
        <dbReference type="Rhea" id="RHEA-COMP:13338"/>
        <dbReference type="Rhea" id="RHEA-COMP:13339"/>
        <dbReference type="Rhea" id="RHEA-COMP:13340"/>
        <dbReference type="ChEBI" id="CHEBI:15378"/>
        <dbReference type="ChEBI" id="CHEBI:29950"/>
        <dbReference type="ChEBI" id="CHEBI:30616"/>
        <dbReference type="ChEBI" id="CHEBI:33019"/>
        <dbReference type="ChEBI" id="CHEBI:33737"/>
        <dbReference type="ChEBI" id="CHEBI:33738"/>
        <dbReference type="ChEBI" id="CHEBI:61963"/>
        <dbReference type="ChEBI" id="CHEBI:65315"/>
        <dbReference type="ChEBI" id="CHEBI:136798"/>
        <dbReference type="ChEBI" id="CHEBI:456215"/>
        <dbReference type="EC" id="2.8.1.4"/>
    </reaction>
</comment>
<comment type="catalytic activity">
    <reaction evidence="1">
        <text>[ThiS sulfur-carrier protein]-C-terminal Gly-Gly-AMP + S-sulfanyl-L-cysteinyl-[cysteine desulfurase] + AH2 = [ThiS sulfur-carrier protein]-C-terminal-Gly-aminoethanethioate + L-cysteinyl-[cysteine desulfurase] + A + AMP + 2 H(+)</text>
        <dbReference type="Rhea" id="RHEA:43340"/>
        <dbReference type="Rhea" id="RHEA-COMP:12157"/>
        <dbReference type="Rhea" id="RHEA-COMP:12158"/>
        <dbReference type="Rhea" id="RHEA-COMP:12910"/>
        <dbReference type="Rhea" id="RHEA-COMP:19908"/>
        <dbReference type="ChEBI" id="CHEBI:13193"/>
        <dbReference type="ChEBI" id="CHEBI:15378"/>
        <dbReference type="ChEBI" id="CHEBI:17499"/>
        <dbReference type="ChEBI" id="CHEBI:29950"/>
        <dbReference type="ChEBI" id="CHEBI:61963"/>
        <dbReference type="ChEBI" id="CHEBI:90618"/>
        <dbReference type="ChEBI" id="CHEBI:232372"/>
        <dbReference type="ChEBI" id="CHEBI:456215"/>
    </reaction>
</comment>
<comment type="pathway">
    <text evidence="1">Cofactor biosynthesis; thiamine diphosphate biosynthesis.</text>
</comment>
<comment type="subcellular location">
    <subcellularLocation>
        <location evidence="1">Cytoplasm</location>
    </subcellularLocation>
</comment>
<comment type="similarity">
    <text evidence="1">Belongs to the ThiI family.</text>
</comment>
<comment type="sequence caution" evidence="3">
    <conflict type="erroneous initiation">
        <sequence resource="EMBL-CDS" id="AAM04880"/>
    </conflict>
</comment>
<dbReference type="EC" id="2.8.1.4" evidence="1"/>
<dbReference type="EMBL" id="AE010299">
    <property type="protein sequence ID" value="AAM04880.1"/>
    <property type="status" value="ALT_INIT"/>
    <property type="molecule type" value="Genomic_DNA"/>
</dbReference>
<dbReference type="RefSeq" id="WP_048066223.1">
    <property type="nucleotide sequence ID" value="NC_003552.1"/>
</dbReference>
<dbReference type="SMR" id="Q8TQS4"/>
<dbReference type="FunCoup" id="Q8TQS4">
    <property type="interactions" value="95"/>
</dbReference>
<dbReference type="STRING" id="188937.MA_1466"/>
<dbReference type="EnsemblBacteria" id="AAM04880">
    <property type="protein sequence ID" value="AAM04880"/>
    <property type="gene ID" value="MA_1466"/>
</dbReference>
<dbReference type="GeneID" id="1473354"/>
<dbReference type="KEGG" id="mac:MA_1466"/>
<dbReference type="HOGENOM" id="CLU_037952_4_0_2"/>
<dbReference type="InParanoid" id="Q8TQS4"/>
<dbReference type="OrthoDB" id="372227at2157"/>
<dbReference type="PhylomeDB" id="Q8TQS4"/>
<dbReference type="UniPathway" id="UPA00060"/>
<dbReference type="Proteomes" id="UP000002487">
    <property type="component" value="Chromosome"/>
</dbReference>
<dbReference type="GO" id="GO:0005829">
    <property type="term" value="C:cytosol"/>
    <property type="evidence" value="ECO:0000318"/>
    <property type="project" value="GO_Central"/>
</dbReference>
<dbReference type="GO" id="GO:0005524">
    <property type="term" value="F:ATP binding"/>
    <property type="evidence" value="ECO:0007669"/>
    <property type="project" value="UniProtKB-UniRule"/>
</dbReference>
<dbReference type="GO" id="GO:0004810">
    <property type="term" value="F:CCA tRNA nucleotidyltransferase activity"/>
    <property type="evidence" value="ECO:0007669"/>
    <property type="project" value="InterPro"/>
</dbReference>
<dbReference type="GO" id="GO:0000049">
    <property type="term" value="F:tRNA binding"/>
    <property type="evidence" value="ECO:0007669"/>
    <property type="project" value="UniProtKB-UniRule"/>
</dbReference>
<dbReference type="GO" id="GO:0140741">
    <property type="term" value="F:tRNA-uracil-4 sulfurtransferase activity"/>
    <property type="evidence" value="ECO:0007669"/>
    <property type="project" value="UniProtKB-EC"/>
</dbReference>
<dbReference type="GO" id="GO:0009228">
    <property type="term" value="P:thiamine biosynthetic process"/>
    <property type="evidence" value="ECO:0007669"/>
    <property type="project" value="UniProtKB-KW"/>
</dbReference>
<dbReference type="GO" id="GO:0009229">
    <property type="term" value="P:thiamine diphosphate biosynthetic process"/>
    <property type="evidence" value="ECO:0007669"/>
    <property type="project" value="UniProtKB-UniRule"/>
</dbReference>
<dbReference type="GO" id="GO:0052837">
    <property type="term" value="P:thiazole biosynthetic process"/>
    <property type="evidence" value="ECO:0000318"/>
    <property type="project" value="GO_Central"/>
</dbReference>
<dbReference type="GO" id="GO:0002937">
    <property type="term" value="P:tRNA 4-thiouridine biosynthesis"/>
    <property type="evidence" value="ECO:0000318"/>
    <property type="project" value="GO_Central"/>
</dbReference>
<dbReference type="CDD" id="cd01712">
    <property type="entry name" value="PPase_ThiI"/>
    <property type="match status" value="1"/>
</dbReference>
<dbReference type="CDD" id="cd11716">
    <property type="entry name" value="THUMP_ThiI"/>
    <property type="match status" value="1"/>
</dbReference>
<dbReference type="FunFam" id="3.40.50.620:FF:000053">
    <property type="entry name" value="Probable tRNA sulfurtransferase"/>
    <property type="match status" value="1"/>
</dbReference>
<dbReference type="Gene3D" id="3.30.2130.30">
    <property type="match status" value="1"/>
</dbReference>
<dbReference type="Gene3D" id="3.40.50.620">
    <property type="entry name" value="HUPs"/>
    <property type="match status" value="1"/>
</dbReference>
<dbReference type="Gene3D" id="3.30.70.1510">
    <property type="entry name" value="THUMP domain-like"/>
    <property type="match status" value="1"/>
</dbReference>
<dbReference type="HAMAP" id="MF_00021">
    <property type="entry name" value="ThiI"/>
    <property type="match status" value="1"/>
</dbReference>
<dbReference type="InterPro" id="IPR014729">
    <property type="entry name" value="Rossmann-like_a/b/a_fold"/>
</dbReference>
<dbReference type="InterPro" id="IPR020536">
    <property type="entry name" value="ThiI_AANH"/>
</dbReference>
<dbReference type="InterPro" id="IPR054173">
    <property type="entry name" value="ThiI_fer"/>
</dbReference>
<dbReference type="InterPro" id="IPR049961">
    <property type="entry name" value="ThiI_N"/>
</dbReference>
<dbReference type="InterPro" id="IPR004114">
    <property type="entry name" value="THUMP_dom"/>
</dbReference>
<dbReference type="InterPro" id="IPR049962">
    <property type="entry name" value="THUMP_ThiI"/>
</dbReference>
<dbReference type="InterPro" id="IPR003720">
    <property type="entry name" value="tRNA_STrfase"/>
</dbReference>
<dbReference type="InterPro" id="IPR050102">
    <property type="entry name" value="tRNA_sulfurtransferase_ThiI"/>
</dbReference>
<dbReference type="NCBIfam" id="TIGR00342">
    <property type="entry name" value="tRNA uracil 4-sulfurtransferase ThiI"/>
    <property type="match status" value="1"/>
</dbReference>
<dbReference type="PANTHER" id="PTHR43209">
    <property type="entry name" value="TRNA SULFURTRANSFERASE"/>
    <property type="match status" value="1"/>
</dbReference>
<dbReference type="PANTHER" id="PTHR43209:SF1">
    <property type="entry name" value="TRNA SULFURTRANSFERASE"/>
    <property type="match status" value="1"/>
</dbReference>
<dbReference type="Pfam" id="PF02568">
    <property type="entry name" value="ThiI"/>
    <property type="match status" value="1"/>
</dbReference>
<dbReference type="Pfam" id="PF22025">
    <property type="entry name" value="ThiI_fer"/>
    <property type="match status" value="1"/>
</dbReference>
<dbReference type="Pfam" id="PF02926">
    <property type="entry name" value="THUMP"/>
    <property type="match status" value="1"/>
</dbReference>
<dbReference type="SMART" id="SM00981">
    <property type="entry name" value="THUMP"/>
    <property type="match status" value="1"/>
</dbReference>
<dbReference type="SUPFAM" id="SSF52402">
    <property type="entry name" value="Adenine nucleotide alpha hydrolases-like"/>
    <property type="match status" value="1"/>
</dbReference>
<dbReference type="SUPFAM" id="SSF143437">
    <property type="entry name" value="THUMP domain-like"/>
    <property type="match status" value="1"/>
</dbReference>
<dbReference type="PROSITE" id="PS51165">
    <property type="entry name" value="THUMP"/>
    <property type="match status" value="1"/>
</dbReference>
<feature type="chain" id="PRO_0000154893" description="Probable tRNA sulfurtransferase">
    <location>
        <begin position="1"/>
        <end position="412"/>
    </location>
</feature>
<feature type="domain" description="THUMP" evidence="1">
    <location>
        <begin position="82"/>
        <end position="190"/>
    </location>
</feature>
<feature type="region of interest" description="Disordered" evidence="2">
    <location>
        <begin position="1"/>
        <end position="22"/>
    </location>
</feature>
<feature type="binding site" evidence="1">
    <location>
        <begin position="208"/>
        <end position="209"/>
    </location>
    <ligand>
        <name>ATP</name>
        <dbReference type="ChEBI" id="CHEBI:30616"/>
    </ligand>
</feature>
<feature type="binding site" evidence="1">
    <location>
        <position position="292"/>
    </location>
    <ligand>
        <name>ATP</name>
        <dbReference type="ChEBI" id="CHEBI:30616"/>
    </ligand>
</feature>
<feature type="binding site" evidence="1">
    <location>
        <position position="314"/>
    </location>
    <ligand>
        <name>ATP</name>
        <dbReference type="ChEBI" id="CHEBI:30616"/>
    </ligand>
</feature>
<feature type="binding site" evidence="1">
    <location>
        <position position="323"/>
    </location>
    <ligand>
        <name>ATP</name>
        <dbReference type="ChEBI" id="CHEBI:30616"/>
    </ligand>
</feature>
<sequence>MPDIFTDNTDKQDSDPSRQGFEGQPNVVIVRYGELALKSTGVRNWYEKILMKNIAAMLDSRNIPYSLLRREWGRIFIETTDPRAAEAAADVFGVVSTSPALVTKPDLESAARTCAFLGTGLIREGESFAIRARRSGNHPFSSADVGRNCGDAVWDSLEKEGKHPRVNLTSPDKEIFVEMRQNLAYVYLETVKGVGGLPLGTQGSMVVLMSGGLDSPVAAWLMMKRGVMITPVYCNNSPYAEDAARERAFDCIRQLQTWAPGHQFATYEIPHGPNLRAFIGTCDRKNTCLLCKRMMYREAYEVMKKVGASGIITGSSLGQVASQTAANMHAEIYQLAIPIYHPLIAFDKSEIVDIARRIGTYDISTRPAGICTAVPERPEVKANYDLIVLEEKKLGIETMVGDALKAVKILKL</sequence>
<keyword id="KW-0067">ATP-binding</keyword>
<keyword id="KW-0963">Cytoplasm</keyword>
<keyword id="KW-0547">Nucleotide-binding</keyword>
<keyword id="KW-1185">Reference proteome</keyword>
<keyword id="KW-0694">RNA-binding</keyword>
<keyword id="KW-0784">Thiamine biosynthesis</keyword>
<keyword id="KW-0808">Transferase</keyword>
<keyword id="KW-0820">tRNA-binding</keyword>
<protein>
    <recommendedName>
        <fullName evidence="1">Probable tRNA sulfurtransferase</fullName>
        <ecNumber evidence="1">2.8.1.4</ecNumber>
    </recommendedName>
    <alternativeName>
        <fullName evidence="1">Sulfur carrier protein ThiS sulfurtransferase</fullName>
    </alternativeName>
    <alternativeName>
        <fullName evidence="1">Thiamine biosynthesis protein ThiI</fullName>
    </alternativeName>
    <alternativeName>
        <fullName evidence="1">tRNA 4-thiouridine synthase</fullName>
    </alternativeName>
</protein>
<gene>
    <name evidence="1" type="primary">thiI</name>
    <name type="ordered locus">MA_1466</name>
</gene>
<accession>Q8TQS4</accession>
<proteinExistence type="inferred from homology"/>
<reference key="1">
    <citation type="journal article" date="2002" name="Genome Res.">
        <title>The genome of Methanosarcina acetivorans reveals extensive metabolic and physiological diversity.</title>
        <authorList>
            <person name="Galagan J.E."/>
            <person name="Nusbaum C."/>
            <person name="Roy A."/>
            <person name="Endrizzi M.G."/>
            <person name="Macdonald P."/>
            <person name="FitzHugh W."/>
            <person name="Calvo S."/>
            <person name="Engels R."/>
            <person name="Smirnov S."/>
            <person name="Atnoor D."/>
            <person name="Brown A."/>
            <person name="Allen N."/>
            <person name="Naylor J."/>
            <person name="Stange-Thomann N."/>
            <person name="DeArellano K."/>
            <person name="Johnson R."/>
            <person name="Linton L."/>
            <person name="McEwan P."/>
            <person name="McKernan K."/>
            <person name="Talamas J."/>
            <person name="Tirrell A."/>
            <person name="Ye W."/>
            <person name="Zimmer A."/>
            <person name="Barber R.D."/>
            <person name="Cann I."/>
            <person name="Graham D.E."/>
            <person name="Grahame D.A."/>
            <person name="Guss A.M."/>
            <person name="Hedderich R."/>
            <person name="Ingram-Smith C."/>
            <person name="Kuettner H.C."/>
            <person name="Krzycki J.A."/>
            <person name="Leigh J.A."/>
            <person name="Li W."/>
            <person name="Liu J."/>
            <person name="Mukhopadhyay B."/>
            <person name="Reeve J.N."/>
            <person name="Smith K."/>
            <person name="Springer T.A."/>
            <person name="Umayam L.A."/>
            <person name="White O."/>
            <person name="White R.H."/>
            <person name="de Macario E.C."/>
            <person name="Ferry J.G."/>
            <person name="Jarrell K.F."/>
            <person name="Jing H."/>
            <person name="Macario A.J.L."/>
            <person name="Paulsen I.T."/>
            <person name="Pritchett M."/>
            <person name="Sowers K.R."/>
            <person name="Swanson R.V."/>
            <person name="Zinder S.H."/>
            <person name="Lander E."/>
            <person name="Metcalf W.W."/>
            <person name="Birren B."/>
        </authorList>
    </citation>
    <scope>NUCLEOTIDE SEQUENCE [LARGE SCALE GENOMIC DNA]</scope>
    <source>
        <strain>ATCC 35395 / DSM 2834 / JCM 12185 / C2A</strain>
    </source>
</reference>